<proteinExistence type="inferred from homology"/>
<name>Y398_ACET2</name>
<evidence type="ECO:0000255" key="1">
    <source>
        <dbReference type="HAMAP-Rule" id="MF_00338"/>
    </source>
</evidence>
<sequence>MIITTTNGIEGKRVVEYKGIVCGEVISGVDFIKDFAAGLTNFFGGRSKSYEGELIEAREGAIREMKERAIQMGANAIIGVDIDYEVLGQGGNMLMVTASGTAVVIE</sequence>
<reference key="1">
    <citation type="submission" date="2007-02" db="EMBL/GenBank/DDBJ databases">
        <title>Complete sequence of Clostridium thermocellum ATCC 27405.</title>
        <authorList>
            <consortium name="US DOE Joint Genome Institute"/>
            <person name="Copeland A."/>
            <person name="Lucas S."/>
            <person name="Lapidus A."/>
            <person name="Barry K."/>
            <person name="Detter J.C."/>
            <person name="Glavina del Rio T."/>
            <person name="Hammon N."/>
            <person name="Israni S."/>
            <person name="Dalin E."/>
            <person name="Tice H."/>
            <person name="Pitluck S."/>
            <person name="Chertkov O."/>
            <person name="Brettin T."/>
            <person name="Bruce D."/>
            <person name="Han C."/>
            <person name="Tapia R."/>
            <person name="Gilna P."/>
            <person name="Schmutz J."/>
            <person name="Larimer F."/>
            <person name="Land M."/>
            <person name="Hauser L."/>
            <person name="Kyrpides N."/>
            <person name="Mikhailova N."/>
            <person name="Wu J.H.D."/>
            <person name="Newcomb M."/>
            <person name="Richardson P."/>
        </authorList>
    </citation>
    <scope>NUCLEOTIDE SEQUENCE [LARGE SCALE GENOMIC DNA]</scope>
    <source>
        <strain>ATCC 27405 / DSM 1237 / JCM 9322 / NBRC 103400 / NCIMB 10682 / NRRL B-4536 / VPI 7372</strain>
    </source>
</reference>
<organism>
    <name type="scientific">Acetivibrio thermocellus (strain ATCC 27405 / DSM 1237 / JCM 9322 / NBRC 103400 / NCIMB 10682 / NRRL B-4536 / VPI 7372)</name>
    <name type="common">Clostridium thermocellum</name>
    <dbReference type="NCBI Taxonomy" id="203119"/>
    <lineage>
        <taxon>Bacteria</taxon>
        <taxon>Bacillati</taxon>
        <taxon>Bacillota</taxon>
        <taxon>Clostridia</taxon>
        <taxon>Eubacteriales</taxon>
        <taxon>Oscillospiraceae</taxon>
        <taxon>Acetivibrio</taxon>
    </lineage>
</organism>
<keyword id="KW-1185">Reference proteome</keyword>
<gene>
    <name type="ordered locus">Cthe_0398</name>
</gene>
<dbReference type="EMBL" id="CP000568">
    <property type="protein sequence ID" value="ABN51636.1"/>
    <property type="molecule type" value="Genomic_DNA"/>
</dbReference>
<dbReference type="RefSeq" id="WP_003512687.1">
    <property type="nucleotide sequence ID" value="NC_009012.1"/>
</dbReference>
<dbReference type="SMR" id="A3DCF7"/>
<dbReference type="STRING" id="203119.Cthe_0398"/>
<dbReference type="GeneID" id="35804361"/>
<dbReference type="KEGG" id="cth:Cthe_0398"/>
<dbReference type="eggNOG" id="COG0393">
    <property type="taxonomic scope" value="Bacteria"/>
</dbReference>
<dbReference type="HOGENOM" id="CLU_117144_3_2_9"/>
<dbReference type="OrthoDB" id="9796448at2"/>
<dbReference type="Proteomes" id="UP000002145">
    <property type="component" value="Chromosome"/>
</dbReference>
<dbReference type="Gene3D" id="3.30.110.70">
    <property type="entry name" value="Hypothetical protein apc22750. Chain B"/>
    <property type="match status" value="1"/>
</dbReference>
<dbReference type="HAMAP" id="MF_00338">
    <property type="entry name" value="UPF0145"/>
    <property type="match status" value="1"/>
</dbReference>
<dbReference type="InterPro" id="IPR035439">
    <property type="entry name" value="UPF0145_dom_sf"/>
</dbReference>
<dbReference type="InterPro" id="IPR002765">
    <property type="entry name" value="UPF0145_YbjQ-like"/>
</dbReference>
<dbReference type="NCBIfam" id="NF002224">
    <property type="entry name" value="PRK01119.1"/>
    <property type="match status" value="1"/>
</dbReference>
<dbReference type="PANTHER" id="PTHR34068">
    <property type="entry name" value="UPF0145 PROTEIN YBJQ"/>
    <property type="match status" value="1"/>
</dbReference>
<dbReference type="PANTHER" id="PTHR34068:SF1">
    <property type="entry name" value="UPF0145 PROTEIN YBJQ"/>
    <property type="match status" value="1"/>
</dbReference>
<dbReference type="Pfam" id="PF01906">
    <property type="entry name" value="YbjQ_1"/>
    <property type="match status" value="1"/>
</dbReference>
<dbReference type="SUPFAM" id="SSF117782">
    <property type="entry name" value="YbjQ-like"/>
    <property type="match status" value="1"/>
</dbReference>
<feature type="chain" id="PRO_1000012991" description="UPF0145 protein Cthe_0398">
    <location>
        <begin position="1"/>
        <end position="106"/>
    </location>
</feature>
<comment type="similarity">
    <text evidence="1">Belongs to the UPF0145 family.</text>
</comment>
<accession>A3DCF7</accession>
<protein>
    <recommendedName>
        <fullName evidence="1">UPF0145 protein Cthe_0398</fullName>
    </recommendedName>
</protein>